<keyword id="KW-0067">ATP-binding</keyword>
<keyword id="KW-0472">Membrane</keyword>
<keyword id="KW-0547">Nucleotide-binding</keyword>
<keyword id="KW-1185">Reference proteome</keyword>
<keyword id="KW-0677">Repeat</keyword>
<keyword id="KW-0812">Transmembrane</keyword>
<keyword id="KW-1133">Transmembrane helix</keyword>
<keyword id="KW-0813">Transport</keyword>
<accession>Q8S628</accession>
<accession>Q0IYJ0</accession>
<accession>Q8GU94</accession>
<organism>
    <name type="scientific">Oryza sativa subsp. japonica</name>
    <name type="common">Rice</name>
    <dbReference type="NCBI Taxonomy" id="39947"/>
    <lineage>
        <taxon>Eukaryota</taxon>
        <taxon>Viridiplantae</taxon>
        <taxon>Streptophyta</taxon>
        <taxon>Embryophyta</taxon>
        <taxon>Tracheophyta</taxon>
        <taxon>Spermatophyta</taxon>
        <taxon>Magnoliopsida</taxon>
        <taxon>Liliopsida</taxon>
        <taxon>Poales</taxon>
        <taxon>Poaceae</taxon>
        <taxon>BOP clade</taxon>
        <taxon>Oryzoideae</taxon>
        <taxon>Oryzeae</taxon>
        <taxon>Oryzinae</taxon>
        <taxon>Oryza</taxon>
        <taxon>Oryza sativa</taxon>
    </lineage>
</organism>
<evidence type="ECO:0000250" key="1"/>
<evidence type="ECO:0000255" key="2"/>
<evidence type="ECO:0000255" key="3">
    <source>
        <dbReference type="PROSITE-ProRule" id="PRU00434"/>
    </source>
</evidence>
<evidence type="ECO:0000256" key="4">
    <source>
        <dbReference type="SAM" id="MobiDB-lite"/>
    </source>
</evidence>
<evidence type="ECO:0000303" key="5">
    <source>
    </source>
</evidence>
<evidence type="ECO:0000303" key="6">
    <source>
    </source>
</evidence>
<evidence type="ECO:0000305" key="7"/>
<evidence type="ECO:0000312" key="8">
    <source>
        <dbReference type="EMBL" id="AAM18755.1"/>
    </source>
</evidence>
<evidence type="ECO:0000312" key="9">
    <source>
        <dbReference type="EMBL" id="BAF26225.1"/>
    </source>
</evidence>
<proteinExistence type="inferred from homology"/>
<reference key="1">
    <citation type="journal article" date="2003" name="Plant Physiol.">
        <title>The ATP-binding cassette transporters: structure, function, and gene family comparison between rice and Arabidopsis.</title>
        <authorList>
            <person name="Jasinski M."/>
            <person name="Ducos E."/>
            <person name="Martinoia E."/>
            <person name="Boutry M."/>
        </authorList>
    </citation>
    <scope>NUCLEOTIDE SEQUENCE [GENOMIC DNA]</scope>
    <source>
        <strain>cv. Nipponbare</strain>
    </source>
</reference>
<reference key="2">
    <citation type="journal article" date="2003" name="Science">
        <title>In-depth view of structure, activity, and evolution of rice chromosome 10.</title>
        <authorList>
            <person name="Yu Y."/>
            <person name="Rambo T."/>
            <person name="Currie J."/>
            <person name="Saski C."/>
            <person name="Kim H.-R."/>
            <person name="Collura K."/>
            <person name="Thompson S."/>
            <person name="Simmons J."/>
            <person name="Yang T.-J."/>
            <person name="Nah G."/>
            <person name="Patel A.J."/>
            <person name="Thurmond S."/>
            <person name="Henry D."/>
            <person name="Oates R."/>
            <person name="Palmer M."/>
            <person name="Pries G."/>
            <person name="Gibson J."/>
            <person name="Anderson H."/>
            <person name="Paradkar M."/>
            <person name="Crane L."/>
            <person name="Dale J."/>
            <person name="Carver M.B."/>
            <person name="Wood T."/>
            <person name="Frisch D."/>
            <person name="Engler F."/>
            <person name="Soderlund C."/>
            <person name="Palmer L.E."/>
            <person name="Teytelman L."/>
            <person name="Nascimento L."/>
            <person name="De la Bastide M."/>
            <person name="Spiegel L."/>
            <person name="Ware D."/>
            <person name="O'Shaughnessy A."/>
            <person name="Dike S."/>
            <person name="Dedhia N."/>
            <person name="Preston R."/>
            <person name="Huang E."/>
            <person name="Ferraro K."/>
            <person name="Kuit K."/>
            <person name="Miller B."/>
            <person name="Zutavern T."/>
            <person name="Katzenberger F."/>
            <person name="Muller S."/>
            <person name="Balija V."/>
            <person name="Martienssen R.A."/>
            <person name="Stein L."/>
            <person name="Minx P."/>
            <person name="Johnson D."/>
            <person name="Cordum H."/>
            <person name="Mardis E."/>
            <person name="Cheng Z."/>
            <person name="Jiang J."/>
            <person name="Wilson R."/>
            <person name="McCombie W.R."/>
            <person name="Wing R.A."/>
            <person name="Yuan Q."/>
            <person name="Ouyang S."/>
            <person name="Liu J."/>
            <person name="Jones K.M."/>
            <person name="Gansberger K."/>
            <person name="Moffat K."/>
            <person name="Hill J."/>
            <person name="Tsitrin T."/>
            <person name="Overton L."/>
            <person name="Bera J."/>
            <person name="Kim M."/>
            <person name="Jin S."/>
            <person name="Tallon L."/>
            <person name="Ciecko A."/>
            <person name="Pai G."/>
            <person name="Van Aken S."/>
            <person name="Utterback T."/>
            <person name="Reidmuller S."/>
            <person name="Bormann J."/>
            <person name="Feldblyum T."/>
            <person name="Hsiao J."/>
            <person name="Zismann V."/>
            <person name="Blunt S."/>
            <person name="de Vazeille A.R."/>
            <person name="Shaffer T."/>
            <person name="Koo H."/>
            <person name="Suh B."/>
            <person name="Yang Q."/>
            <person name="Haas B."/>
            <person name="Peterson J."/>
            <person name="Pertea M."/>
            <person name="Volfovsky N."/>
            <person name="Wortman J."/>
            <person name="White O."/>
            <person name="Salzberg S.L."/>
            <person name="Fraser C.M."/>
            <person name="Buell C.R."/>
            <person name="Messing J."/>
            <person name="Song R."/>
            <person name="Fuks G."/>
            <person name="Llaca V."/>
            <person name="Kovchak S."/>
            <person name="Young S."/>
            <person name="Bowers J.E."/>
            <person name="Paterson A.H."/>
            <person name="Johns M.A."/>
            <person name="Mao L."/>
            <person name="Pan H."/>
            <person name="Dean R.A."/>
        </authorList>
    </citation>
    <scope>NUCLEOTIDE SEQUENCE [LARGE SCALE GENOMIC DNA]</scope>
    <source>
        <strain>cv. Nipponbare</strain>
    </source>
</reference>
<reference key="3">
    <citation type="journal article" date="2005" name="Nature">
        <title>The map-based sequence of the rice genome.</title>
        <authorList>
            <consortium name="International rice genome sequencing project (IRGSP)"/>
        </authorList>
    </citation>
    <scope>NUCLEOTIDE SEQUENCE [LARGE SCALE GENOMIC DNA]</scope>
    <source>
        <strain>cv. Nipponbare</strain>
    </source>
</reference>
<reference key="4">
    <citation type="journal article" date="2008" name="Nucleic Acids Res.">
        <title>The rice annotation project database (RAP-DB): 2008 update.</title>
        <authorList>
            <consortium name="The rice annotation project (RAP)"/>
        </authorList>
    </citation>
    <scope>GENOME REANNOTATION</scope>
    <source>
        <strain>cv. Nipponbare</strain>
    </source>
</reference>
<reference key="5">
    <citation type="journal article" date="2013" name="Rice">
        <title>Improvement of the Oryza sativa Nipponbare reference genome using next generation sequence and optical map data.</title>
        <authorList>
            <person name="Kawahara Y."/>
            <person name="de la Bastide M."/>
            <person name="Hamilton J.P."/>
            <person name="Kanamori H."/>
            <person name="McCombie W.R."/>
            <person name="Ouyang S."/>
            <person name="Schwartz D.C."/>
            <person name="Tanaka T."/>
            <person name="Wu J."/>
            <person name="Zhou S."/>
            <person name="Childs K.L."/>
            <person name="Davidson R.M."/>
            <person name="Lin H."/>
            <person name="Quesada-Ocampo L."/>
            <person name="Vaillancourt B."/>
            <person name="Sakai H."/>
            <person name="Lee S.S."/>
            <person name="Kim J."/>
            <person name="Numa H."/>
            <person name="Itoh T."/>
            <person name="Buell C.R."/>
            <person name="Matsumoto T."/>
        </authorList>
    </citation>
    <scope>GENOME REANNOTATION</scope>
    <source>
        <strain>cv. Nipponbare</strain>
    </source>
</reference>
<reference key="6">
    <citation type="journal article" date="2006" name="FEBS Lett.">
        <title>Organization and function of the plant pleiotropic drug resistance ABC transporter family.</title>
        <authorList>
            <person name="Crouzet J."/>
            <person name="Trombik T."/>
            <person name="Fraysse A.S."/>
            <person name="Boutry M."/>
        </authorList>
    </citation>
    <scope>GENE FAMILY</scope>
    <scope>NOMENCLATURE</scope>
</reference>
<reference key="7">
    <citation type="journal article" date="2008" name="Trends Plant Sci.">
        <title>Plant ABC proteins - a unified nomenclature and updated inventory.</title>
        <authorList>
            <person name="Verrier P.J."/>
            <person name="Bird D."/>
            <person name="Burla B."/>
            <person name="Dassa E."/>
            <person name="Forestier C."/>
            <person name="Geisler M."/>
            <person name="Klein M."/>
            <person name="Kolukisaoglu H.U."/>
            <person name="Lee Y."/>
            <person name="Martinoia E."/>
            <person name="Murphy A."/>
            <person name="Rea P.A."/>
            <person name="Samuels L."/>
            <person name="Schulz B."/>
            <person name="Spalding E.J."/>
            <person name="Yazaki K."/>
            <person name="Theodoulou F.L."/>
        </authorList>
    </citation>
    <scope>GENE FAMILY</scope>
    <scope>NOMENCLATURE</scope>
</reference>
<feature type="chain" id="PRO_0000234651" description="ABC transporter G family member 51">
    <location>
        <begin position="1"/>
        <end position="1441"/>
    </location>
</feature>
<feature type="transmembrane region" description="Helical" evidence="2">
    <location>
        <begin position="523"/>
        <end position="543"/>
    </location>
</feature>
<feature type="transmembrane region" description="Helical" evidence="2">
    <location>
        <begin position="558"/>
        <end position="578"/>
    </location>
</feature>
<feature type="transmembrane region" description="Helical" evidence="2">
    <location>
        <begin position="615"/>
        <end position="635"/>
    </location>
</feature>
<feature type="transmembrane region" description="Helical" evidence="2">
    <location>
        <begin position="642"/>
        <end position="662"/>
    </location>
</feature>
<feature type="transmembrane region" description="Helical" evidence="2">
    <location>
        <begin position="668"/>
        <end position="688"/>
    </location>
</feature>
<feature type="transmembrane region" description="Helical" evidence="2">
    <location>
        <begin position="751"/>
        <end position="771"/>
    </location>
</feature>
<feature type="transmembrane region" description="Helical" evidence="2">
    <location>
        <begin position="1184"/>
        <end position="1204"/>
    </location>
</feature>
<feature type="transmembrane region" description="Helical" evidence="2">
    <location>
        <begin position="1214"/>
        <end position="1234"/>
    </location>
</feature>
<feature type="transmembrane region" description="Helical" evidence="2">
    <location>
        <begin position="1271"/>
        <end position="1291"/>
    </location>
</feature>
<feature type="transmembrane region" description="Helical" evidence="2">
    <location>
        <begin position="1300"/>
        <end position="1320"/>
    </location>
</feature>
<feature type="transmembrane region" description="Helical" evidence="2">
    <location>
        <begin position="1330"/>
        <end position="1350"/>
    </location>
</feature>
<feature type="transmembrane region" description="Helical" evidence="2">
    <location>
        <begin position="1355"/>
        <end position="1375"/>
    </location>
</feature>
<feature type="transmembrane region" description="Helical" evidence="2">
    <location>
        <begin position="1413"/>
        <end position="1433"/>
    </location>
</feature>
<feature type="domain" description="ABC transporter 1" evidence="3">
    <location>
        <begin position="154"/>
        <end position="428"/>
    </location>
</feature>
<feature type="domain" description="ABC transmembrane type-2 1">
    <location>
        <begin position="505"/>
        <end position="718"/>
    </location>
</feature>
<feature type="domain" description="ABC transporter 2" evidence="3">
    <location>
        <begin position="838"/>
        <end position="1090"/>
    </location>
</feature>
<feature type="domain" description="ABC transmembrane type-2 2">
    <location>
        <begin position="1163"/>
        <end position="1380"/>
    </location>
</feature>
<feature type="region of interest" description="Disordered" evidence="4">
    <location>
        <begin position="52"/>
        <end position="71"/>
    </location>
</feature>
<feature type="compositionally biased region" description="Gly residues" evidence="4">
    <location>
        <begin position="58"/>
        <end position="69"/>
    </location>
</feature>
<feature type="binding site" evidence="3">
    <location>
        <begin position="187"/>
        <end position="194"/>
    </location>
    <ligand>
        <name>ATP</name>
        <dbReference type="ChEBI" id="CHEBI:30616"/>
        <label>1</label>
    </ligand>
</feature>
<feature type="binding site" evidence="3">
    <location>
        <begin position="883"/>
        <end position="890"/>
    </location>
    <ligand>
        <name>ATP</name>
        <dbReference type="ChEBI" id="CHEBI:30616"/>
        <label>2</label>
    </ligand>
</feature>
<feature type="sequence conflict" description="In Ref. 1; CAD59564." evidence="7" ref="1">
    <original>S</original>
    <variation>R</variation>
    <location>
        <position position="1441"/>
    </location>
</feature>
<sequence>MAFAAGGIDHHVAVDVEGEEESRRRAVAEEADLLWAAFERLPSAKRRSHAVVLPDPDGLGGGDGGGRGEGQLVDVRKLDRPGLQRVLRHALATSELDNANLLHGIKARFDAVGLEVPRVEVRFQNLTVSTDVHVGRRALPTLVNYVHDIAERILISSHLLRPDKHKLVILDDVSGVIKPGRMTLLLGPPASGKSTLLLALADKLDSQLKKSGEVAYNGMALDQFCVQRTSAYISQTDNHIGELTVRETLDFAAKCQGASENWQECLKELVNLEKERGIRPSPEIDAFMKTASFRREKHNLVSDYVLRVLGLDICADTPVGSDMERGVSGGQKKRVTTGEMIIGPRKTLLMDEISTGLDSSTTFQIVNCMRNFVHEMEATVLMSLLQPAPETFELFDDLILLSEGKIIYQGPIKHVVDYFKSLGFSLPPRKGIADFLQEVTSKKDQAQYWSDQSKQHIFVSASEMAAVFKESQYGTYLEANLSSSCGNKDSALVLPRSKFAVPKFSLVRACFARELILISRNRFLYTFRTCQVAFVGIITSTLFLRTRLHPVDEQNGNLYLACLFFGLVHMMFNGFTEMTMTISRLPVFYKQRDNFFHPAWAFSLPNWILRIPYSFIEAVVWSCVVYYTVGFAPTVDRFFRFMLLLFSIHQMALGLFRMMGAIARDMTIASTFGSAVLLAIFLLGGFVVPKGFIKPWWDWAYWISPLMYAQRAVSVNEFSASRWSKVSVSGNMTVGTNILISHSLPTDDHWFWIGVGVLLAYSIFFNIMFTLALAFLNPLRKPQSMVPSDAGDGRDVHINTDSNKNTIGEIFENNDGFEGQTECKSKKGMILPFQPLTMTFHNVNYYVNMPKEMQAKGVPEKRLQLLSEVSGIFRPRVLTALVGASGSGKTTLMDVLAGRKTGGYIEGDIRISGHKKEQRTFARIAGYVEQNDIHSPQVTVEESLWFSSTLRLPNDISRETRHAFVEEVMALVELDQIRYALVGKQGLTGLSTEQRKRLTIAVELVANPSIIFMDEPTSGLDARAAAIVMRTVRNTVDTGRTVVCTIHQPSIDIFEAFDELLLMKRGGRVIYGGSLGVNSVDMINYFQGIPRVVPITEGYNPATWMLEVTTQASEERLGIDFATVYKNSYQFRNVENLIVELSIPASGTEPLKFSSEFSQNRLTQFMVCLRKQSLVYWRSPEYNVVRLFFTSVAAIIFGSIFWNVGMKRESTEDILLLMGALYAACLFLGVNNASSVQPVVSVERTVYYRERAANMYSSFPYAAAQVYHGLVEIPYIAVQTLIFGLITYFMVNYERNIRKLVLYLIYMFLTFTYFTFYGMVAVGLTPTQHMASVVSSAFYSLWNLLSGFLIPQSRIPGWWIWFYYICPVAWTLRGVITSQLGDVDTRIVGPGFDGTVHEFLQQNLGFEQGMTGATVAVLVAFSVFFFSIYAISIKMINFQRS</sequence>
<dbReference type="EMBL" id="AJ535042">
    <property type="protein sequence ID" value="CAD59564.1"/>
    <property type="molecule type" value="Genomic_DNA"/>
</dbReference>
<dbReference type="EMBL" id="AC099325">
    <property type="protein sequence ID" value="AAM18755.1"/>
    <property type="molecule type" value="Genomic_DNA"/>
</dbReference>
<dbReference type="EMBL" id="DP000086">
    <property type="protein sequence ID" value="AAP52728.2"/>
    <property type="status" value="ALT_SEQ"/>
    <property type="molecule type" value="Genomic_DNA"/>
</dbReference>
<dbReference type="EMBL" id="AP008216">
    <property type="protein sequence ID" value="BAF26225.1"/>
    <property type="status" value="ALT_SEQ"/>
    <property type="molecule type" value="Genomic_DNA"/>
</dbReference>
<dbReference type="EMBL" id="AP014966">
    <property type="status" value="NOT_ANNOTATED_CDS"/>
    <property type="molecule type" value="Genomic_DNA"/>
</dbReference>
<dbReference type="SMR" id="Q8S628"/>
<dbReference type="FunCoup" id="Q8S628">
    <property type="interactions" value="186"/>
</dbReference>
<dbReference type="STRING" id="39947.Q8S628"/>
<dbReference type="PaxDb" id="39947-Q8S628"/>
<dbReference type="KEGG" id="dosa:Os10g0205500"/>
<dbReference type="InParanoid" id="Q8S628"/>
<dbReference type="Proteomes" id="UP000000763">
    <property type="component" value="Chromosome 10"/>
</dbReference>
<dbReference type="Proteomes" id="UP000059680">
    <property type="component" value="Chromosome 10"/>
</dbReference>
<dbReference type="GO" id="GO:0005886">
    <property type="term" value="C:plasma membrane"/>
    <property type="evidence" value="ECO:0007669"/>
    <property type="project" value="UniProtKB-ARBA"/>
</dbReference>
<dbReference type="GO" id="GO:0140359">
    <property type="term" value="F:ABC-type transporter activity"/>
    <property type="evidence" value="ECO:0007669"/>
    <property type="project" value="InterPro"/>
</dbReference>
<dbReference type="GO" id="GO:0005524">
    <property type="term" value="F:ATP binding"/>
    <property type="evidence" value="ECO:0007669"/>
    <property type="project" value="UniProtKB-KW"/>
</dbReference>
<dbReference type="GO" id="GO:0016887">
    <property type="term" value="F:ATP hydrolysis activity"/>
    <property type="evidence" value="ECO:0007669"/>
    <property type="project" value="InterPro"/>
</dbReference>
<dbReference type="CDD" id="cd03232">
    <property type="entry name" value="ABCG_PDR_domain2"/>
    <property type="match status" value="1"/>
</dbReference>
<dbReference type="FunFam" id="3.40.50.300:FF:000179">
    <property type="entry name" value="ABC transporter G family member 34"/>
    <property type="match status" value="1"/>
</dbReference>
<dbReference type="FunFam" id="3.40.50.300:FF:000059">
    <property type="entry name" value="ABC transporter G family member 40"/>
    <property type="match status" value="1"/>
</dbReference>
<dbReference type="Gene3D" id="3.40.50.300">
    <property type="entry name" value="P-loop containing nucleotide triphosphate hydrolases"/>
    <property type="match status" value="2"/>
</dbReference>
<dbReference type="InterPro" id="IPR003593">
    <property type="entry name" value="AAA+_ATPase"/>
</dbReference>
<dbReference type="InterPro" id="IPR013525">
    <property type="entry name" value="ABC2_TM"/>
</dbReference>
<dbReference type="InterPro" id="IPR003439">
    <property type="entry name" value="ABC_transporter-like_ATP-bd"/>
</dbReference>
<dbReference type="InterPro" id="IPR043926">
    <property type="entry name" value="ABCG_dom"/>
</dbReference>
<dbReference type="InterPro" id="IPR034003">
    <property type="entry name" value="ABCG_PDR_2"/>
</dbReference>
<dbReference type="InterPro" id="IPR027417">
    <property type="entry name" value="P-loop_NTPase"/>
</dbReference>
<dbReference type="InterPro" id="IPR013581">
    <property type="entry name" value="PDR_assoc"/>
</dbReference>
<dbReference type="PANTHER" id="PTHR19241">
    <property type="entry name" value="ATP-BINDING CASSETTE TRANSPORTER"/>
    <property type="match status" value="1"/>
</dbReference>
<dbReference type="Pfam" id="PF01061">
    <property type="entry name" value="ABC2_membrane"/>
    <property type="match status" value="2"/>
</dbReference>
<dbReference type="Pfam" id="PF19055">
    <property type="entry name" value="ABC2_membrane_7"/>
    <property type="match status" value="2"/>
</dbReference>
<dbReference type="Pfam" id="PF00005">
    <property type="entry name" value="ABC_tran"/>
    <property type="match status" value="2"/>
</dbReference>
<dbReference type="Pfam" id="PF08370">
    <property type="entry name" value="PDR_assoc"/>
    <property type="match status" value="1"/>
</dbReference>
<dbReference type="SMART" id="SM00382">
    <property type="entry name" value="AAA"/>
    <property type="match status" value="2"/>
</dbReference>
<dbReference type="SUPFAM" id="SSF52540">
    <property type="entry name" value="P-loop containing nucleoside triphosphate hydrolases"/>
    <property type="match status" value="2"/>
</dbReference>
<dbReference type="PROSITE" id="PS50893">
    <property type="entry name" value="ABC_TRANSPORTER_2"/>
    <property type="match status" value="2"/>
</dbReference>
<comment type="function">
    <text evidence="1">May be a general defense protein.</text>
</comment>
<comment type="subcellular location">
    <subcellularLocation>
        <location evidence="2">Membrane</location>
        <topology evidence="2">Multi-pass membrane protein</topology>
    </subcellularLocation>
</comment>
<comment type="similarity">
    <text evidence="7">Belongs to the ABC transporter superfamily. ABCG family. PDR (TC 3.A.1.205) subfamily.</text>
</comment>
<comment type="sequence caution" evidence="7">
    <conflict type="erroneous gene model prediction">
        <sequence resource="EMBL-CDS" id="AAP52728"/>
    </conflict>
</comment>
<comment type="sequence caution" evidence="7">
    <conflict type="erroneous gene model prediction">
        <sequence resource="EMBL-CDS" id="BAF26225"/>
    </conflict>
</comment>
<name>AB51G_ORYSJ</name>
<protein>
    <recommendedName>
        <fullName evidence="7">ABC transporter G family member 51</fullName>
        <shortName evidence="7">OsABCG51</shortName>
    </recommendedName>
    <alternativeName>
        <fullName evidence="5 6">Pleiotropic drug resistance protein 13</fullName>
        <shortName evidence="6">OsPDR13</shortName>
    </alternativeName>
</protein>
<gene>
    <name evidence="7" type="primary">ABCG51</name>
    <name evidence="5 6" type="synonym">PDR13</name>
    <name evidence="9" type="ordered locus">Os10g0205500</name>
    <name type="ordered locus">LOC_Os10g13830</name>
    <name evidence="8" type="ORF">OSJNBb0048O22.8</name>
</gene>